<protein>
    <recommendedName>
        <fullName evidence="1">Large ribosomal subunit protein uL16</fullName>
    </recommendedName>
    <alternativeName>
        <fullName evidence="2">50S ribosomal protein L16</fullName>
    </alternativeName>
</protein>
<reference key="1">
    <citation type="journal article" date="2008" name="Genomics">
        <title>Characterization of ST-4821 complex, a unique Neisseria meningitidis clone.</title>
        <authorList>
            <person name="Peng J."/>
            <person name="Yang L."/>
            <person name="Yang F."/>
            <person name="Yang J."/>
            <person name="Yan Y."/>
            <person name="Nie H."/>
            <person name="Zhang X."/>
            <person name="Xiong Z."/>
            <person name="Jiang Y."/>
            <person name="Cheng F."/>
            <person name="Xu X."/>
            <person name="Chen S."/>
            <person name="Sun L."/>
            <person name="Li W."/>
            <person name="Shen Y."/>
            <person name="Shao Z."/>
            <person name="Liang X."/>
            <person name="Xu J."/>
            <person name="Jin Q."/>
        </authorList>
    </citation>
    <scope>NUCLEOTIDE SEQUENCE [LARGE SCALE GENOMIC DNA]</scope>
    <source>
        <strain>053442</strain>
    </source>
</reference>
<sequence length="138" mass="15519">MLQPTRLKYRKQQKGRNTGIATRGNKVSFGEFGLKAVGRGRLTARQIEAARRAMTRHIKRGGRIWIRVFPDKPITEKPIQVRMGGGKGNVEYYIAEIKPGKVLYEMDGVPEELAREAFELAAAKLPIPTTFVVRQVGQ</sequence>
<accession>A9M3V9</accession>
<organism>
    <name type="scientific">Neisseria meningitidis serogroup C (strain 053442)</name>
    <dbReference type="NCBI Taxonomy" id="374833"/>
    <lineage>
        <taxon>Bacteria</taxon>
        <taxon>Pseudomonadati</taxon>
        <taxon>Pseudomonadota</taxon>
        <taxon>Betaproteobacteria</taxon>
        <taxon>Neisseriales</taxon>
        <taxon>Neisseriaceae</taxon>
        <taxon>Neisseria</taxon>
    </lineage>
</organism>
<gene>
    <name evidence="1" type="primary">rplP</name>
    <name type="ordered locus">NMCC_1998</name>
</gene>
<proteinExistence type="inferred from homology"/>
<dbReference type="EMBL" id="CP000381">
    <property type="protein sequence ID" value="ABX74121.1"/>
    <property type="molecule type" value="Genomic_DNA"/>
</dbReference>
<dbReference type="RefSeq" id="WP_002215430.1">
    <property type="nucleotide sequence ID" value="NC_010120.1"/>
</dbReference>
<dbReference type="SMR" id="A9M3V9"/>
<dbReference type="GeneID" id="93387224"/>
<dbReference type="KEGG" id="nmn:NMCC_1998"/>
<dbReference type="HOGENOM" id="CLU_078858_2_1_4"/>
<dbReference type="Proteomes" id="UP000001177">
    <property type="component" value="Chromosome"/>
</dbReference>
<dbReference type="GO" id="GO:0022625">
    <property type="term" value="C:cytosolic large ribosomal subunit"/>
    <property type="evidence" value="ECO:0007669"/>
    <property type="project" value="TreeGrafter"/>
</dbReference>
<dbReference type="GO" id="GO:0019843">
    <property type="term" value="F:rRNA binding"/>
    <property type="evidence" value="ECO:0007669"/>
    <property type="project" value="UniProtKB-UniRule"/>
</dbReference>
<dbReference type="GO" id="GO:0003735">
    <property type="term" value="F:structural constituent of ribosome"/>
    <property type="evidence" value="ECO:0007669"/>
    <property type="project" value="InterPro"/>
</dbReference>
<dbReference type="GO" id="GO:0000049">
    <property type="term" value="F:tRNA binding"/>
    <property type="evidence" value="ECO:0007669"/>
    <property type="project" value="UniProtKB-KW"/>
</dbReference>
<dbReference type="GO" id="GO:0006412">
    <property type="term" value="P:translation"/>
    <property type="evidence" value="ECO:0007669"/>
    <property type="project" value="UniProtKB-UniRule"/>
</dbReference>
<dbReference type="CDD" id="cd01433">
    <property type="entry name" value="Ribosomal_L16_L10e"/>
    <property type="match status" value="1"/>
</dbReference>
<dbReference type="FunFam" id="3.90.1170.10:FF:000001">
    <property type="entry name" value="50S ribosomal protein L16"/>
    <property type="match status" value="1"/>
</dbReference>
<dbReference type="Gene3D" id="3.90.1170.10">
    <property type="entry name" value="Ribosomal protein L10e/L16"/>
    <property type="match status" value="1"/>
</dbReference>
<dbReference type="HAMAP" id="MF_01342">
    <property type="entry name" value="Ribosomal_uL16"/>
    <property type="match status" value="1"/>
</dbReference>
<dbReference type="InterPro" id="IPR047873">
    <property type="entry name" value="Ribosomal_uL16"/>
</dbReference>
<dbReference type="InterPro" id="IPR000114">
    <property type="entry name" value="Ribosomal_uL16_bact-type"/>
</dbReference>
<dbReference type="InterPro" id="IPR020798">
    <property type="entry name" value="Ribosomal_uL16_CS"/>
</dbReference>
<dbReference type="InterPro" id="IPR016180">
    <property type="entry name" value="Ribosomal_uL16_dom"/>
</dbReference>
<dbReference type="InterPro" id="IPR036920">
    <property type="entry name" value="Ribosomal_uL16_sf"/>
</dbReference>
<dbReference type="NCBIfam" id="TIGR01164">
    <property type="entry name" value="rplP_bact"/>
    <property type="match status" value="1"/>
</dbReference>
<dbReference type="PANTHER" id="PTHR12220">
    <property type="entry name" value="50S/60S RIBOSOMAL PROTEIN L16"/>
    <property type="match status" value="1"/>
</dbReference>
<dbReference type="PANTHER" id="PTHR12220:SF13">
    <property type="entry name" value="LARGE RIBOSOMAL SUBUNIT PROTEIN UL16M"/>
    <property type="match status" value="1"/>
</dbReference>
<dbReference type="Pfam" id="PF00252">
    <property type="entry name" value="Ribosomal_L16"/>
    <property type="match status" value="1"/>
</dbReference>
<dbReference type="PRINTS" id="PR00060">
    <property type="entry name" value="RIBOSOMALL16"/>
</dbReference>
<dbReference type="SUPFAM" id="SSF54686">
    <property type="entry name" value="Ribosomal protein L16p/L10e"/>
    <property type="match status" value="1"/>
</dbReference>
<dbReference type="PROSITE" id="PS00586">
    <property type="entry name" value="RIBOSOMAL_L16_1"/>
    <property type="match status" value="1"/>
</dbReference>
<evidence type="ECO:0000255" key="1">
    <source>
        <dbReference type="HAMAP-Rule" id="MF_01342"/>
    </source>
</evidence>
<evidence type="ECO:0000305" key="2"/>
<name>RL16_NEIM0</name>
<comment type="function">
    <text evidence="1">Binds 23S rRNA and is also seen to make contacts with the A and possibly P site tRNAs.</text>
</comment>
<comment type="subunit">
    <text evidence="1">Part of the 50S ribosomal subunit.</text>
</comment>
<comment type="similarity">
    <text evidence="1">Belongs to the universal ribosomal protein uL16 family.</text>
</comment>
<keyword id="KW-0687">Ribonucleoprotein</keyword>
<keyword id="KW-0689">Ribosomal protein</keyword>
<keyword id="KW-0694">RNA-binding</keyword>
<keyword id="KW-0699">rRNA-binding</keyword>
<keyword id="KW-0820">tRNA-binding</keyword>
<feature type="chain" id="PRO_1000086765" description="Large ribosomal subunit protein uL16">
    <location>
        <begin position="1"/>
        <end position="138"/>
    </location>
</feature>